<sequence>MLQKIADQRSYLTAAHNTLTALEKKLDNDYGEIEHNNNVIEYTVDGVGRYVVSRQPSVMELWVSSPITGPSKFGMVEKKFVEKKNGMEIMKYFEMEMERIKRMLGNR</sequence>
<dbReference type="EMBL" id="EF571315">
    <property type="protein sequence ID" value="ABS58599.1"/>
    <property type="molecule type" value="Genomic_DNA"/>
</dbReference>
<dbReference type="EMBL" id="JH993936">
    <property type="protein sequence ID" value="ELQ75646.1"/>
    <property type="molecule type" value="Genomic_DNA"/>
</dbReference>
<dbReference type="SMR" id="B0YLW8"/>
<dbReference type="STRING" id="72359.B0YLW8"/>
<dbReference type="VEuPathDB" id="MicrosporidiaDB:THOM_1399"/>
<dbReference type="HOGENOM" id="CLU_080880_4_2_1"/>
<dbReference type="InParanoid" id="B0YLW8"/>
<dbReference type="OMA" id="RRHEWID"/>
<dbReference type="OrthoDB" id="1897642at2759"/>
<dbReference type="Proteomes" id="UP000011185">
    <property type="component" value="Unassembled WGS sequence"/>
</dbReference>
<dbReference type="GO" id="GO:0005739">
    <property type="term" value="C:mitochondrion"/>
    <property type="evidence" value="ECO:0007669"/>
    <property type="project" value="TreeGrafter"/>
</dbReference>
<dbReference type="GO" id="GO:0051537">
    <property type="term" value="F:2 iron, 2 sulfur cluster binding"/>
    <property type="evidence" value="ECO:0007669"/>
    <property type="project" value="TreeGrafter"/>
</dbReference>
<dbReference type="GO" id="GO:0008199">
    <property type="term" value="F:ferric iron binding"/>
    <property type="evidence" value="ECO:0007669"/>
    <property type="project" value="InterPro"/>
</dbReference>
<dbReference type="GO" id="GO:0008198">
    <property type="term" value="F:ferrous iron binding"/>
    <property type="evidence" value="ECO:0007669"/>
    <property type="project" value="TreeGrafter"/>
</dbReference>
<dbReference type="GO" id="GO:0004322">
    <property type="term" value="F:ferroxidase activity"/>
    <property type="evidence" value="ECO:0007669"/>
    <property type="project" value="TreeGrafter"/>
</dbReference>
<dbReference type="GO" id="GO:0034986">
    <property type="term" value="F:iron chaperone activity"/>
    <property type="evidence" value="ECO:0007669"/>
    <property type="project" value="TreeGrafter"/>
</dbReference>
<dbReference type="GO" id="GO:0006879">
    <property type="term" value="P:intracellular iron ion homeostasis"/>
    <property type="evidence" value="ECO:0007669"/>
    <property type="project" value="TreeGrafter"/>
</dbReference>
<dbReference type="GO" id="GO:0006826">
    <property type="term" value="P:iron ion transport"/>
    <property type="evidence" value="ECO:0007669"/>
    <property type="project" value="UniProtKB-KW"/>
</dbReference>
<dbReference type="GO" id="GO:0016226">
    <property type="term" value="P:iron-sulfur cluster assembly"/>
    <property type="evidence" value="ECO:0007669"/>
    <property type="project" value="InterPro"/>
</dbReference>
<dbReference type="Gene3D" id="3.30.920.10">
    <property type="entry name" value="Frataxin/CyaY"/>
    <property type="match status" value="1"/>
</dbReference>
<dbReference type="InterPro" id="IPR002908">
    <property type="entry name" value="Frataxin/CyaY"/>
</dbReference>
<dbReference type="InterPro" id="IPR036524">
    <property type="entry name" value="Frataxin/CyaY_sf"/>
</dbReference>
<dbReference type="InterPro" id="IPR020895">
    <property type="entry name" value="Frataxin_CS"/>
</dbReference>
<dbReference type="PANTHER" id="PTHR16821">
    <property type="entry name" value="FRATAXIN"/>
    <property type="match status" value="1"/>
</dbReference>
<dbReference type="PANTHER" id="PTHR16821:SF2">
    <property type="entry name" value="FRATAXIN, MITOCHONDRIAL"/>
    <property type="match status" value="1"/>
</dbReference>
<dbReference type="Pfam" id="PF01491">
    <property type="entry name" value="Frataxin_Cyay"/>
    <property type="match status" value="1"/>
</dbReference>
<dbReference type="SMART" id="SM01219">
    <property type="entry name" value="Frataxin_Cyay"/>
    <property type="match status" value="1"/>
</dbReference>
<dbReference type="SUPFAM" id="SSF55387">
    <property type="entry name" value="Frataxin/Nqo15-like"/>
    <property type="match status" value="1"/>
</dbReference>
<dbReference type="PROSITE" id="PS01344">
    <property type="entry name" value="FRATAXIN_1"/>
    <property type="match status" value="1"/>
</dbReference>
<dbReference type="PROSITE" id="PS50810">
    <property type="entry name" value="FRATAXIN_2"/>
    <property type="match status" value="1"/>
</dbReference>
<reference key="1">
    <citation type="journal article" date="2008" name="Nature">
        <title>Localization and functionality of microsporidian iron-sulphur cluster assembly proteins.</title>
        <authorList>
            <person name="Goldberg A.V."/>
            <person name="Molik S."/>
            <person name="Tsaousis A.D."/>
            <person name="Neumann K."/>
            <person name="Kuhnke G."/>
            <person name="Delbac F."/>
            <person name="Vivares C.P."/>
            <person name="Hirt R.P."/>
            <person name="Lill R."/>
            <person name="Embley T.M."/>
        </authorList>
    </citation>
    <scope>NUCLEOTIDE SEQUENCE [GENOMIC DNA]</scope>
    <scope>SUBCELLULAR LOCATION</scope>
</reference>
<reference key="2">
    <citation type="journal article" date="2012" name="PLoS Pathog.">
        <title>The genome of the obligate intracellular parasite Trachipleistophora hominis: new insights into microsporidian genome dynamics and reductive evolution.</title>
        <authorList>
            <person name="Heinz E."/>
            <person name="Williams T.A."/>
            <person name="Nakjang S."/>
            <person name="Noel C.J."/>
            <person name="Swan D.C."/>
            <person name="Goldberg A.V."/>
            <person name="Harris S.R."/>
            <person name="Weinmaier T."/>
            <person name="Markert S."/>
            <person name="Becher D."/>
            <person name="Bernhardt J."/>
            <person name="Dagan T."/>
            <person name="Hacker C."/>
            <person name="Lucocq J.M."/>
            <person name="Schweder T."/>
            <person name="Rattei T."/>
            <person name="Hall N."/>
            <person name="Hirt R.P."/>
            <person name="Embley T.M."/>
        </authorList>
    </citation>
    <scope>NUCLEOTIDE SEQUENCE [LARGE SCALE GENOMIC DNA]</scope>
</reference>
<comment type="function">
    <text evidence="1">Promotes the assembly and repair of iron-sulfur clusters by delivering Fe(2+) to proteins involved in these pathways.</text>
</comment>
<comment type="subunit">
    <text evidence="1">Monomer.</text>
</comment>
<comment type="subcellular location">
    <subcellularLocation>
        <location evidence="2">Cytoplasm</location>
    </subcellularLocation>
</comment>
<comment type="similarity">
    <text evidence="3">Belongs to the frataxin family.</text>
</comment>
<organism>
    <name type="scientific">Trachipleistophora hominis</name>
    <name type="common">Microsporidian parasite</name>
    <dbReference type="NCBI Taxonomy" id="72359"/>
    <lineage>
        <taxon>Eukaryota</taxon>
        <taxon>Fungi</taxon>
        <taxon>Fungi incertae sedis</taxon>
        <taxon>Microsporidia</taxon>
        <taxon>Pleistophoridae</taxon>
        <taxon>Trachipleistophora</taxon>
    </lineage>
</organism>
<accession>B0YLW8</accession>
<accession>L7JX71</accession>
<protein>
    <recommendedName>
        <fullName>Frataxin</fullName>
        <shortName>Fxn</shortName>
    </recommendedName>
</protein>
<gene>
    <name type="primary">YFH1</name>
    <name type="ORF">THOM_1399</name>
</gene>
<keyword id="KW-0963">Cytoplasm</keyword>
<keyword id="KW-0406">Ion transport</keyword>
<keyword id="KW-0408">Iron</keyword>
<keyword id="KW-0410">Iron transport</keyword>
<keyword id="KW-1185">Reference proteome</keyword>
<keyword id="KW-0813">Transport</keyword>
<feature type="chain" id="PRO_0000382931" description="Frataxin">
    <location>
        <begin position="1"/>
        <end position="107"/>
    </location>
</feature>
<name>FRDA_TRAHO</name>
<evidence type="ECO:0000250" key="1"/>
<evidence type="ECO:0000269" key="2">
    <source>
    </source>
</evidence>
<evidence type="ECO:0000305" key="3"/>
<proteinExistence type="inferred from homology"/>